<accession>Q1R8B9</accession>
<protein>
    <recommendedName>
        <fullName evidence="1">Large ribosomal subunit protein bL19</fullName>
    </recommendedName>
    <alternativeName>
        <fullName evidence="2">50S ribosomal protein L19</fullName>
    </alternativeName>
</protein>
<gene>
    <name evidence="1" type="primary">rplS</name>
    <name type="ordered locus">UTI89_C2939</name>
</gene>
<comment type="function">
    <text evidence="1">This protein is located at the 30S-50S ribosomal subunit interface and may play a role in the structure and function of the aminoacyl-tRNA binding site.</text>
</comment>
<comment type="similarity">
    <text evidence="1">Belongs to the bacterial ribosomal protein bL19 family.</text>
</comment>
<proteinExistence type="inferred from homology"/>
<keyword id="KW-0687">Ribonucleoprotein</keyword>
<keyword id="KW-0689">Ribosomal protein</keyword>
<name>RL19_ECOUT</name>
<sequence length="115" mass="13133">MSNIIKQLEQEQMKQDVPSFRPGDTVEVKVWVVEGSKKRLQAFEGVVIAIRNRGLHSAFTVRKISNGEGVERVFQTHSPVVDSISVKRRGAVRKAKLYYLRERTGKAARIKERLN</sequence>
<reference key="1">
    <citation type="journal article" date="2006" name="Proc. Natl. Acad. Sci. U.S.A.">
        <title>Identification of genes subject to positive selection in uropathogenic strains of Escherichia coli: a comparative genomics approach.</title>
        <authorList>
            <person name="Chen S.L."/>
            <person name="Hung C.-S."/>
            <person name="Xu J."/>
            <person name="Reigstad C.S."/>
            <person name="Magrini V."/>
            <person name="Sabo A."/>
            <person name="Blasiar D."/>
            <person name="Bieri T."/>
            <person name="Meyer R.R."/>
            <person name="Ozersky P."/>
            <person name="Armstrong J.R."/>
            <person name="Fulton R.S."/>
            <person name="Latreille J.P."/>
            <person name="Spieth J."/>
            <person name="Hooton T.M."/>
            <person name="Mardis E.R."/>
            <person name="Hultgren S.J."/>
            <person name="Gordon J.I."/>
        </authorList>
    </citation>
    <scope>NUCLEOTIDE SEQUENCE [LARGE SCALE GENOMIC DNA]</scope>
    <source>
        <strain>UTI89 / UPEC</strain>
    </source>
</reference>
<dbReference type="EMBL" id="CP000243">
    <property type="protein sequence ID" value="ABE08395.1"/>
    <property type="molecule type" value="Genomic_DNA"/>
</dbReference>
<dbReference type="RefSeq" id="WP_000065253.1">
    <property type="nucleotide sequence ID" value="NZ_CP064825.1"/>
</dbReference>
<dbReference type="SMR" id="Q1R8B9"/>
<dbReference type="GeneID" id="93774456"/>
<dbReference type="KEGG" id="eci:UTI89_C2939"/>
<dbReference type="HOGENOM" id="CLU_103507_2_1_6"/>
<dbReference type="Proteomes" id="UP000001952">
    <property type="component" value="Chromosome"/>
</dbReference>
<dbReference type="GO" id="GO:0022625">
    <property type="term" value="C:cytosolic large ribosomal subunit"/>
    <property type="evidence" value="ECO:0007669"/>
    <property type="project" value="TreeGrafter"/>
</dbReference>
<dbReference type="GO" id="GO:0003735">
    <property type="term" value="F:structural constituent of ribosome"/>
    <property type="evidence" value="ECO:0007669"/>
    <property type="project" value="InterPro"/>
</dbReference>
<dbReference type="GO" id="GO:0006412">
    <property type="term" value="P:translation"/>
    <property type="evidence" value="ECO:0007669"/>
    <property type="project" value="UniProtKB-UniRule"/>
</dbReference>
<dbReference type="FunFam" id="2.30.30.790:FF:000001">
    <property type="entry name" value="50S ribosomal protein L19"/>
    <property type="match status" value="1"/>
</dbReference>
<dbReference type="Gene3D" id="2.30.30.790">
    <property type="match status" value="1"/>
</dbReference>
<dbReference type="HAMAP" id="MF_00402">
    <property type="entry name" value="Ribosomal_bL19"/>
    <property type="match status" value="1"/>
</dbReference>
<dbReference type="InterPro" id="IPR001857">
    <property type="entry name" value="Ribosomal_bL19"/>
</dbReference>
<dbReference type="InterPro" id="IPR018257">
    <property type="entry name" value="Ribosomal_bL19_CS"/>
</dbReference>
<dbReference type="InterPro" id="IPR038657">
    <property type="entry name" value="Ribosomal_bL19_sf"/>
</dbReference>
<dbReference type="InterPro" id="IPR008991">
    <property type="entry name" value="Translation_prot_SH3-like_sf"/>
</dbReference>
<dbReference type="NCBIfam" id="TIGR01024">
    <property type="entry name" value="rplS_bact"/>
    <property type="match status" value="1"/>
</dbReference>
<dbReference type="PANTHER" id="PTHR15680:SF9">
    <property type="entry name" value="LARGE RIBOSOMAL SUBUNIT PROTEIN BL19M"/>
    <property type="match status" value="1"/>
</dbReference>
<dbReference type="PANTHER" id="PTHR15680">
    <property type="entry name" value="RIBOSOMAL PROTEIN L19"/>
    <property type="match status" value="1"/>
</dbReference>
<dbReference type="Pfam" id="PF01245">
    <property type="entry name" value="Ribosomal_L19"/>
    <property type="match status" value="1"/>
</dbReference>
<dbReference type="PIRSF" id="PIRSF002191">
    <property type="entry name" value="Ribosomal_L19"/>
    <property type="match status" value="1"/>
</dbReference>
<dbReference type="PRINTS" id="PR00061">
    <property type="entry name" value="RIBOSOMALL19"/>
</dbReference>
<dbReference type="SUPFAM" id="SSF50104">
    <property type="entry name" value="Translation proteins SH3-like domain"/>
    <property type="match status" value="1"/>
</dbReference>
<dbReference type="PROSITE" id="PS01015">
    <property type="entry name" value="RIBOSOMAL_L19"/>
    <property type="match status" value="1"/>
</dbReference>
<evidence type="ECO:0000255" key="1">
    <source>
        <dbReference type="HAMAP-Rule" id="MF_00402"/>
    </source>
</evidence>
<evidence type="ECO:0000305" key="2"/>
<organism>
    <name type="scientific">Escherichia coli (strain UTI89 / UPEC)</name>
    <dbReference type="NCBI Taxonomy" id="364106"/>
    <lineage>
        <taxon>Bacteria</taxon>
        <taxon>Pseudomonadati</taxon>
        <taxon>Pseudomonadota</taxon>
        <taxon>Gammaproteobacteria</taxon>
        <taxon>Enterobacterales</taxon>
        <taxon>Enterobacteriaceae</taxon>
        <taxon>Escherichia</taxon>
    </lineage>
</organism>
<feature type="chain" id="PRO_0000252507" description="Large ribosomal subunit protein bL19">
    <location>
        <begin position="1"/>
        <end position="115"/>
    </location>
</feature>